<gene>
    <name evidence="2" type="primary">nuoB</name>
    <name type="ordered locus">Caul_2835</name>
</gene>
<protein>
    <recommendedName>
        <fullName evidence="2">NADH-quinone oxidoreductase subunit B</fullName>
        <ecNumber evidence="2">7.1.1.-</ecNumber>
    </recommendedName>
    <alternativeName>
        <fullName evidence="2">NADH dehydrogenase I subunit B</fullName>
    </alternativeName>
    <alternativeName>
        <fullName evidence="2">NDH-1 subunit B</fullName>
    </alternativeName>
</protein>
<comment type="function">
    <text evidence="1">NDH-1 shuttles electrons from NADH, via FMN and iron-sulfur (Fe-S) centers, to quinones in the respiratory chain. Couples the redox reaction to proton translocation (for every two electrons transferred, four hydrogen ions are translocated across the cytoplasmic membrane), and thus conserves the redox energy in a proton gradient (By similarity).</text>
</comment>
<comment type="catalytic activity">
    <reaction evidence="2">
        <text>a quinone + NADH + 5 H(+)(in) = a quinol + NAD(+) + 4 H(+)(out)</text>
        <dbReference type="Rhea" id="RHEA:57888"/>
        <dbReference type="ChEBI" id="CHEBI:15378"/>
        <dbReference type="ChEBI" id="CHEBI:24646"/>
        <dbReference type="ChEBI" id="CHEBI:57540"/>
        <dbReference type="ChEBI" id="CHEBI:57945"/>
        <dbReference type="ChEBI" id="CHEBI:132124"/>
    </reaction>
</comment>
<comment type="cofactor">
    <cofactor evidence="2">
        <name>[4Fe-4S] cluster</name>
        <dbReference type="ChEBI" id="CHEBI:49883"/>
    </cofactor>
    <text evidence="2">Binds 1 [4Fe-4S] cluster.</text>
</comment>
<comment type="subunit">
    <text evidence="2">NDH-1 is composed of 14 different subunits. Subunits NuoB, C, D, E, F, and G constitute the peripheral sector of the complex.</text>
</comment>
<comment type="subcellular location">
    <subcellularLocation>
        <location evidence="2">Cell inner membrane</location>
        <topology evidence="2">Peripheral membrane protein</topology>
        <orientation evidence="2">Cytoplasmic side</orientation>
    </subcellularLocation>
</comment>
<comment type="similarity">
    <text evidence="2">Belongs to the complex I 20 kDa subunit family.</text>
</comment>
<reference key="1">
    <citation type="submission" date="2008-01" db="EMBL/GenBank/DDBJ databases">
        <title>Complete sequence of chromosome of Caulobacter sp. K31.</title>
        <authorList>
            <consortium name="US DOE Joint Genome Institute"/>
            <person name="Copeland A."/>
            <person name="Lucas S."/>
            <person name="Lapidus A."/>
            <person name="Barry K."/>
            <person name="Glavina del Rio T."/>
            <person name="Dalin E."/>
            <person name="Tice H."/>
            <person name="Pitluck S."/>
            <person name="Bruce D."/>
            <person name="Goodwin L."/>
            <person name="Thompson L.S."/>
            <person name="Brettin T."/>
            <person name="Detter J.C."/>
            <person name="Han C."/>
            <person name="Schmutz J."/>
            <person name="Larimer F."/>
            <person name="Land M."/>
            <person name="Hauser L."/>
            <person name="Kyrpides N."/>
            <person name="Kim E."/>
            <person name="Stephens C."/>
            <person name="Richardson P."/>
        </authorList>
    </citation>
    <scope>NUCLEOTIDE SEQUENCE [LARGE SCALE GENOMIC DNA]</scope>
    <source>
        <strain>K31</strain>
    </source>
</reference>
<organism>
    <name type="scientific">Caulobacter sp. (strain K31)</name>
    <dbReference type="NCBI Taxonomy" id="366602"/>
    <lineage>
        <taxon>Bacteria</taxon>
        <taxon>Pseudomonadati</taxon>
        <taxon>Pseudomonadota</taxon>
        <taxon>Alphaproteobacteria</taxon>
        <taxon>Caulobacterales</taxon>
        <taxon>Caulobacteraceae</taxon>
        <taxon>Caulobacter</taxon>
    </lineage>
</organism>
<accession>B0SZ51</accession>
<sequence>MIVPPNSAAPSSSLVPAGSAARSTVQGYDPKLHDPYFDGLSGQLADKGFVTAAADDLITWARTGSLMWMTFGLACCAVEMMHSAMPRYDLERYGFAPRASPRQSDVMIVAGTLTNKMAPALRKVYDQMPEPRYVISMGSCANGGGYYYYSYSVVRGCDRIVPIDIYVPGCPPTAEALVYGVLQLQKKIRRTGTIER</sequence>
<keyword id="KW-0004">4Fe-4S</keyword>
<keyword id="KW-0997">Cell inner membrane</keyword>
<keyword id="KW-1003">Cell membrane</keyword>
<keyword id="KW-0408">Iron</keyword>
<keyword id="KW-0411">Iron-sulfur</keyword>
<keyword id="KW-0472">Membrane</keyword>
<keyword id="KW-0479">Metal-binding</keyword>
<keyword id="KW-0520">NAD</keyword>
<keyword id="KW-0874">Quinone</keyword>
<keyword id="KW-1278">Translocase</keyword>
<keyword id="KW-0813">Transport</keyword>
<keyword id="KW-0830">Ubiquinone</keyword>
<evidence type="ECO:0000250" key="1"/>
<evidence type="ECO:0000255" key="2">
    <source>
        <dbReference type="HAMAP-Rule" id="MF_01356"/>
    </source>
</evidence>
<feature type="chain" id="PRO_5000308141" description="NADH-quinone oxidoreductase subunit B">
    <location>
        <begin position="1"/>
        <end position="196"/>
    </location>
</feature>
<feature type="binding site" evidence="2">
    <location>
        <position position="75"/>
    </location>
    <ligand>
        <name>[4Fe-4S] cluster</name>
        <dbReference type="ChEBI" id="CHEBI:49883"/>
    </ligand>
</feature>
<feature type="binding site" evidence="2">
    <location>
        <position position="76"/>
    </location>
    <ligand>
        <name>[4Fe-4S] cluster</name>
        <dbReference type="ChEBI" id="CHEBI:49883"/>
    </ligand>
</feature>
<feature type="binding site" evidence="2">
    <location>
        <position position="140"/>
    </location>
    <ligand>
        <name>[4Fe-4S] cluster</name>
        <dbReference type="ChEBI" id="CHEBI:49883"/>
    </ligand>
</feature>
<feature type="binding site" evidence="2">
    <location>
        <position position="170"/>
    </location>
    <ligand>
        <name>[4Fe-4S] cluster</name>
        <dbReference type="ChEBI" id="CHEBI:49883"/>
    </ligand>
</feature>
<proteinExistence type="inferred from homology"/>
<dbReference type="EC" id="7.1.1.-" evidence="2"/>
<dbReference type="EMBL" id="CP000927">
    <property type="protein sequence ID" value="ABZ71962.1"/>
    <property type="molecule type" value="Genomic_DNA"/>
</dbReference>
<dbReference type="SMR" id="B0SZ51"/>
<dbReference type="STRING" id="366602.Caul_2835"/>
<dbReference type="KEGG" id="cak:Caul_2835"/>
<dbReference type="eggNOG" id="COG0377">
    <property type="taxonomic scope" value="Bacteria"/>
</dbReference>
<dbReference type="HOGENOM" id="CLU_055737_7_0_5"/>
<dbReference type="GO" id="GO:0005886">
    <property type="term" value="C:plasma membrane"/>
    <property type="evidence" value="ECO:0007669"/>
    <property type="project" value="UniProtKB-SubCell"/>
</dbReference>
<dbReference type="GO" id="GO:0045271">
    <property type="term" value="C:respiratory chain complex I"/>
    <property type="evidence" value="ECO:0007669"/>
    <property type="project" value="TreeGrafter"/>
</dbReference>
<dbReference type="GO" id="GO:0051539">
    <property type="term" value="F:4 iron, 4 sulfur cluster binding"/>
    <property type="evidence" value="ECO:0007669"/>
    <property type="project" value="UniProtKB-KW"/>
</dbReference>
<dbReference type="GO" id="GO:0005506">
    <property type="term" value="F:iron ion binding"/>
    <property type="evidence" value="ECO:0007669"/>
    <property type="project" value="UniProtKB-UniRule"/>
</dbReference>
<dbReference type="GO" id="GO:0008137">
    <property type="term" value="F:NADH dehydrogenase (ubiquinone) activity"/>
    <property type="evidence" value="ECO:0007669"/>
    <property type="project" value="InterPro"/>
</dbReference>
<dbReference type="GO" id="GO:0050136">
    <property type="term" value="F:NADH:ubiquinone reductase (non-electrogenic) activity"/>
    <property type="evidence" value="ECO:0007669"/>
    <property type="project" value="UniProtKB-UniRule"/>
</dbReference>
<dbReference type="GO" id="GO:0048038">
    <property type="term" value="F:quinone binding"/>
    <property type="evidence" value="ECO:0007669"/>
    <property type="project" value="UniProtKB-KW"/>
</dbReference>
<dbReference type="GO" id="GO:0009060">
    <property type="term" value="P:aerobic respiration"/>
    <property type="evidence" value="ECO:0007669"/>
    <property type="project" value="TreeGrafter"/>
</dbReference>
<dbReference type="GO" id="GO:0015990">
    <property type="term" value="P:electron transport coupled proton transport"/>
    <property type="evidence" value="ECO:0007669"/>
    <property type="project" value="TreeGrafter"/>
</dbReference>
<dbReference type="FunFam" id="3.40.50.12280:FF:000001">
    <property type="entry name" value="NADH-quinone oxidoreductase subunit B 2"/>
    <property type="match status" value="1"/>
</dbReference>
<dbReference type="Gene3D" id="3.40.50.12280">
    <property type="match status" value="1"/>
</dbReference>
<dbReference type="HAMAP" id="MF_01356">
    <property type="entry name" value="NDH1_NuoB"/>
    <property type="match status" value="1"/>
</dbReference>
<dbReference type="InterPro" id="IPR006137">
    <property type="entry name" value="NADH_UbQ_OxRdtase-like_20kDa"/>
</dbReference>
<dbReference type="InterPro" id="IPR006138">
    <property type="entry name" value="NADH_UQ_OxRdtase_20Kd_su"/>
</dbReference>
<dbReference type="NCBIfam" id="TIGR01957">
    <property type="entry name" value="nuoB_fam"/>
    <property type="match status" value="1"/>
</dbReference>
<dbReference type="NCBIfam" id="NF005012">
    <property type="entry name" value="PRK06411.1"/>
    <property type="match status" value="1"/>
</dbReference>
<dbReference type="PANTHER" id="PTHR11995">
    <property type="entry name" value="NADH DEHYDROGENASE"/>
    <property type="match status" value="1"/>
</dbReference>
<dbReference type="PANTHER" id="PTHR11995:SF14">
    <property type="entry name" value="NADH DEHYDROGENASE [UBIQUINONE] IRON-SULFUR PROTEIN 7, MITOCHONDRIAL"/>
    <property type="match status" value="1"/>
</dbReference>
<dbReference type="Pfam" id="PF01058">
    <property type="entry name" value="Oxidored_q6"/>
    <property type="match status" value="1"/>
</dbReference>
<dbReference type="SUPFAM" id="SSF56770">
    <property type="entry name" value="HydA/Nqo6-like"/>
    <property type="match status" value="1"/>
</dbReference>
<dbReference type="PROSITE" id="PS01150">
    <property type="entry name" value="COMPLEX1_20K"/>
    <property type="match status" value="1"/>
</dbReference>
<name>NUOB_CAUSK</name>